<geneLocation type="plasmid">
    <name>pSymA</name>
    <name>megaplasmid 1</name>
</geneLocation>
<name>CH603_RHIME</name>
<sequence length="544" mass="57522">MSAKQIVFSTDARDRLLRGVELLNNAVKVTLGPKGRNVVIDKSYGAPRITKDGVSVAKEIELEDKFENMGAQMVRAVASKTNDLAGDGTTTATVLAASIFREGAKLVSVGMNPMDLKRGIDLGVAAVLAEIKARATKVISSSEIAQVGTIAANGDAGVGEMIARAMEKVGNEGVITVEEARTADTELDVVEGMQFDRGYLSPYFVTNAEKMRVELEDPYILIHEKKLGSLQAMLPILEAAVQSGKPLLIISEDVEGEVLATLVVNRLRGGLKIAAVKTPGFGDRRKAMLEDIAVLTAGQMISEDLGIKLENVTLDMLGRARRVLIEKDTTTIIDGSGDKASIQARVSQIKAQIEETASDYDKEKLQERLAKLAGGVAVIRVGGATELEVKEKKDRIDDALNATRAAVEEGIVPGGGVALLRAKSALVGLTDDNADVTAGISIVRRALEAPIRQIADNAGVEGSIVVGKLVDGRDHNQGFDAQTETYVDMIKAGIVDPAKVVRTALRDAGSIASLLITAEAMIADIPERGSPQSTGNGAVDSMGY</sequence>
<keyword id="KW-0067">ATP-binding</keyword>
<keyword id="KW-0143">Chaperone</keyword>
<keyword id="KW-0963">Cytoplasm</keyword>
<keyword id="KW-0413">Isomerase</keyword>
<keyword id="KW-0547">Nucleotide-binding</keyword>
<keyword id="KW-0614">Plasmid</keyword>
<keyword id="KW-1185">Reference proteome</keyword>
<keyword id="KW-0346">Stress response</keyword>
<comment type="function">
    <text evidence="1">Together with its co-chaperonin GroES, plays an essential role in assisting protein folding. The GroEL-GroES system forms a nano-cage that allows encapsulation of the non-native substrate proteins and provides a physical environment optimized to promote and accelerate protein folding.</text>
</comment>
<comment type="catalytic activity">
    <reaction evidence="1">
        <text>ATP + H2O + a folded polypeptide = ADP + phosphate + an unfolded polypeptide.</text>
        <dbReference type="EC" id="5.6.1.7"/>
    </reaction>
</comment>
<comment type="subunit">
    <text evidence="1">Forms a cylinder of 14 subunits composed of two heptameric rings stacked back-to-back. Interacts with the co-chaperonin GroES.</text>
</comment>
<comment type="subcellular location">
    <subcellularLocation>
        <location evidence="1">Cytoplasm</location>
    </subcellularLocation>
</comment>
<comment type="similarity">
    <text evidence="1">Belongs to the chaperonin (HSP60) family.</text>
</comment>
<organism>
    <name type="scientific">Rhizobium meliloti (strain 1021)</name>
    <name type="common">Ensifer meliloti</name>
    <name type="synonym">Sinorhizobium meliloti</name>
    <dbReference type="NCBI Taxonomy" id="266834"/>
    <lineage>
        <taxon>Bacteria</taxon>
        <taxon>Pseudomonadati</taxon>
        <taxon>Pseudomonadota</taxon>
        <taxon>Alphaproteobacteria</taxon>
        <taxon>Hyphomicrobiales</taxon>
        <taxon>Rhizobiaceae</taxon>
        <taxon>Sinorhizobium/Ensifer group</taxon>
        <taxon>Sinorhizobium</taxon>
    </lineage>
</organism>
<evidence type="ECO:0000255" key="1">
    <source>
        <dbReference type="HAMAP-Rule" id="MF_00600"/>
    </source>
</evidence>
<reference key="1">
    <citation type="journal article" date="2001" name="Proc. Natl. Acad. Sci. U.S.A.">
        <title>Nucleotide sequence and predicted functions of the entire Sinorhizobium meliloti pSymA megaplasmid.</title>
        <authorList>
            <person name="Barnett M.J."/>
            <person name="Fisher R.F."/>
            <person name="Jones T."/>
            <person name="Komp C."/>
            <person name="Abola A.P."/>
            <person name="Barloy-Hubler F."/>
            <person name="Bowser L."/>
            <person name="Capela D."/>
            <person name="Galibert F."/>
            <person name="Gouzy J."/>
            <person name="Gurjal M."/>
            <person name="Hong A."/>
            <person name="Huizar L."/>
            <person name="Hyman R.W."/>
            <person name="Kahn D."/>
            <person name="Kahn M.L."/>
            <person name="Kalman S."/>
            <person name="Keating D.H."/>
            <person name="Palm C."/>
            <person name="Peck M.C."/>
            <person name="Surzycki R."/>
            <person name="Wells D.H."/>
            <person name="Yeh K.-C."/>
            <person name="Davis R.W."/>
            <person name="Federspiel N.A."/>
            <person name="Long S.R."/>
        </authorList>
    </citation>
    <scope>NUCLEOTIDE SEQUENCE [LARGE SCALE GENOMIC DNA]</scope>
    <source>
        <strain>1021</strain>
    </source>
</reference>
<reference key="2">
    <citation type="journal article" date="2001" name="Science">
        <title>The composite genome of the legume symbiont Sinorhizobium meliloti.</title>
        <authorList>
            <person name="Galibert F."/>
            <person name="Finan T.M."/>
            <person name="Long S.R."/>
            <person name="Puehler A."/>
            <person name="Abola P."/>
            <person name="Ampe F."/>
            <person name="Barloy-Hubler F."/>
            <person name="Barnett M.J."/>
            <person name="Becker A."/>
            <person name="Boistard P."/>
            <person name="Bothe G."/>
            <person name="Boutry M."/>
            <person name="Bowser L."/>
            <person name="Buhrmester J."/>
            <person name="Cadieu E."/>
            <person name="Capela D."/>
            <person name="Chain P."/>
            <person name="Cowie A."/>
            <person name="Davis R.W."/>
            <person name="Dreano S."/>
            <person name="Federspiel N.A."/>
            <person name="Fisher R.F."/>
            <person name="Gloux S."/>
            <person name="Godrie T."/>
            <person name="Goffeau A."/>
            <person name="Golding B."/>
            <person name="Gouzy J."/>
            <person name="Gurjal M."/>
            <person name="Hernandez-Lucas I."/>
            <person name="Hong A."/>
            <person name="Huizar L."/>
            <person name="Hyman R.W."/>
            <person name="Jones T."/>
            <person name="Kahn D."/>
            <person name="Kahn M.L."/>
            <person name="Kalman S."/>
            <person name="Keating D.H."/>
            <person name="Kiss E."/>
            <person name="Komp C."/>
            <person name="Lelaure V."/>
            <person name="Masuy D."/>
            <person name="Palm C."/>
            <person name="Peck M.C."/>
            <person name="Pohl T.M."/>
            <person name="Portetelle D."/>
            <person name="Purnelle B."/>
            <person name="Ramsperger U."/>
            <person name="Surzycki R."/>
            <person name="Thebault P."/>
            <person name="Vandenbol M."/>
            <person name="Vorhoelter F.J."/>
            <person name="Weidner S."/>
            <person name="Wells D.H."/>
            <person name="Wong K."/>
            <person name="Yeh K.-C."/>
            <person name="Batut J."/>
        </authorList>
    </citation>
    <scope>NUCLEOTIDE SEQUENCE [LARGE SCALE GENOMIC DNA]</scope>
    <source>
        <strain>1021</strain>
    </source>
</reference>
<proteinExistence type="inferred from homology"/>
<accession>Q930Y0</accession>
<gene>
    <name evidence="1" type="primary">groEL3</name>
    <name evidence="1" type="synonym">groL3</name>
    <name type="ordered locus">RA0064</name>
    <name type="ORF">SMa0124</name>
</gene>
<protein>
    <recommendedName>
        <fullName evidence="1">Chaperonin GroEL 3</fullName>
        <ecNumber evidence="1">5.6.1.7</ecNumber>
    </recommendedName>
    <alternativeName>
        <fullName evidence="1">60 kDa chaperonin 3</fullName>
    </alternativeName>
    <alternativeName>
        <fullName evidence="1">Chaperonin-60 3</fullName>
        <shortName evidence="1">Cpn60 3</shortName>
    </alternativeName>
</protein>
<dbReference type="EC" id="5.6.1.7" evidence="1"/>
<dbReference type="EMBL" id="AE006469">
    <property type="protein sequence ID" value="AAK64722.1"/>
    <property type="molecule type" value="Genomic_DNA"/>
</dbReference>
<dbReference type="PIR" id="H95269">
    <property type="entry name" value="H95269"/>
</dbReference>
<dbReference type="RefSeq" id="NP_435310.1">
    <property type="nucleotide sequence ID" value="NC_003037.1"/>
</dbReference>
<dbReference type="SMR" id="Q930Y0"/>
<dbReference type="EnsemblBacteria" id="AAK64722">
    <property type="protein sequence ID" value="AAK64722"/>
    <property type="gene ID" value="SMa0124"/>
</dbReference>
<dbReference type="KEGG" id="sme:SMa0124"/>
<dbReference type="PATRIC" id="fig|266834.11.peg.67"/>
<dbReference type="HOGENOM" id="CLU_016503_3_0_5"/>
<dbReference type="OrthoDB" id="9766614at2"/>
<dbReference type="Proteomes" id="UP000001976">
    <property type="component" value="Plasmid pSymA"/>
</dbReference>
<dbReference type="GO" id="GO:0005737">
    <property type="term" value="C:cytoplasm"/>
    <property type="evidence" value="ECO:0007669"/>
    <property type="project" value="UniProtKB-SubCell"/>
</dbReference>
<dbReference type="GO" id="GO:0005524">
    <property type="term" value="F:ATP binding"/>
    <property type="evidence" value="ECO:0007669"/>
    <property type="project" value="UniProtKB-UniRule"/>
</dbReference>
<dbReference type="GO" id="GO:0140662">
    <property type="term" value="F:ATP-dependent protein folding chaperone"/>
    <property type="evidence" value="ECO:0007669"/>
    <property type="project" value="InterPro"/>
</dbReference>
<dbReference type="GO" id="GO:0016853">
    <property type="term" value="F:isomerase activity"/>
    <property type="evidence" value="ECO:0007669"/>
    <property type="project" value="UniProtKB-KW"/>
</dbReference>
<dbReference type="GO" id="GO:0051082">
    <property type="term" value="F:unfolded protein binding"/>
    <property type="evidence" value="ECO:0007669"/>
    <property type="project" value="UniProtKB-UniRule"/>
</dbReference>
<dbReference type="GO" id="GO:0042026">
    <property type="term" value="P:protein refolding"/>
    <property type="evidence" value="ECO:0007669"/>
    <property type="project" value="UniProtKB-UniRule"/>
</dbReference>
<dbReference type="CDD" id="cd03344">
    <property type="entry name" value="GroEL"/>
    <property type="match status" value="1"/>
</dbReference>
<dbReference type="FunFam" id="3.50.7.10:FF:000001">
    <property type="entry name" value="60 kDa chaperonin"/>
    <property type="match status" value="1"/>
</dbReference>
<dbReference type="Gene3D" id="3.50.7.10">
    <property type="entry name" value="GroEL"/>
    <property type="match status" value="1"/>
</dbReference>
<dbReference type="Gene3D" id="1.10.560.10">
    <property type="entry name" value="GroEL-like equatorial domain"/>
    <property type="match status" value="1"/>
</dbReference>
<dbReference type="Gene3D" id="3.30.260.10">
    <property type="entry name" value="TCP-1-like chaperonin intermediate domain"/>
    <property type="match status" value="1"/>
</dbReference>
<dbReference type="HAMAP" id="MF_00600">
    <property type="entry name" value="CH60"/>
    <property type="match status" value="1"/>
</dbReference>
<dbReference type="InterPro" id="IPR018370">
    <property type="entry name" value="Chaperonin_Cpn60_CS"/>
</dbReference>
<dbReference type="InterPro" id="IPR001844">
    <property type="entry name" value="Cpn60/GroEL"/>
</dbReference>
<dbReference type="InterPro" id="IPR002423">
    <property type="entry name" value="Cpn60/GroEL/TCP-1"/>
</dbReference>
<dbReference type="InterPro" id="IPR027409">
    <property type="entry name" value="GroEL-like_apical_dom_sf"/>
</dbReference>
<dbReference type="InterPro" id="IPR027413">
    <property type="entry name" value="GROEL-like_equatorial_sf"/>
</dbReference>
<dbReference type="InterPro" id="IPR027410">
    <property type="entry name" value="TCP-1-like_intermed_sf"/>
</dbReference>
<dbReference type="NCBIfam" id="TIGR02348">
    <property type="entry name" value="GroEL"/>
    <property type="match status" value="1"/>
</dbReference>
<dbReference type="NCBIfam" id="NF000592">
    <property type="entry name" value="PRK00013.1"/>
    <property type="match status" value="1"/>
</dbReference>
<dbReference type="NCBIfam" id="NF009487">
    <property type="entry name" value="PRK12849.1"/>
    <property type="match status" value="1"/>
</dbReference>
<dbReference type="NCBIfam" id="NF009488">
    <property type="entry name" value="PRK12850.1"/>
    <property type="match status" value="1"/>
</dbReference>
<dbReference type="NCBIfam" id="NF009489">
    <property type="entry name" value="PRK12851.1"/>
    <property type="match status" value="1"/>
</dbReference>
<dbReference type="PANTHER" id="PTHR45633">
    <property type="entry name" value="60 KDA HEAT SHOCK PROTEIN, MITOCHONDRIAL"/>
    <property type="match status" value="1"/>
</dbReference>
<dbReference type="Pfam" id="PF00118">
    <property type="entry name" value="Cpn60_TCP1"/>
    <property type="match status" value="1"/>
</dbReference>
<dbReference type="PRINTS" id="PR00298">
    <property type="entry name" value="CHAPERONIN60"/>
</dbReference>
<dbReference type="SUPFAM" id="SSF52029">
    <property type="entry name" value="GroEL apical domain-like"/>
    <property type="match status" value="1"/>
</dbReference>
<dbReference type="SUPFAM" id="SSF48592">
    <property type="entry name" value="GroEL equatorial domain-like"/>
    <property type="match status" value="1"/>
</dbReference>
<dbReference type="SUPFAM" id="SSF54849">
    <property type="entry name" value="GroEL-intermediate domain like"/>
    <property type="match status" value="1"/>
</dbReference>
<dbReference type="PROSITE" id="PS00296">
    <property type="entry name" value="CHAPERONINS_CPN60"/>
    <property type="match status" value="1"/>
</dbReference>
<feature type="chain" id="PRO_0000063502" description="Chaperonin GroEL 3">
    <location>
        <begin position="1"/>
        <end position="544"/>
    </location>
</feature>
<feature type="binding site" evidence="1">
    <location>
        <begin position="30"/>
        <end position="33"/>
    </location>
    <ligand>
        <name>ATP</name>
        <dbReference type="ChEBI" id="CHEBI:30616"/>
    </ligand>
</feature>
<feature type="binding site" evidence="1">
    <location>
        <position position="51"/>
    </location>
    <ligand>
        <name>ATP</name>
        <dbReference type="ChEBI" id="CHEBI:30616"/>
    </ligand>
</feature>
<feature type="binding site" evidence="1">
    <location>
        <begin position="87"/>
        <end position="91"/>
    </location>
    <ligand>
        <name>ATP</name>
        <dbReference type="ChEBI" id="CHEBI:30616"/>
    </ligand>
</feature>
<feature type="binding site" evidence="1">
    <location>
        <position position="415"/>
    </location>
    <ligand>
        <name>ATP</name>
        <dbReference type="ChEBI" id="CHEBI:30616"/>
    </ligand>
</feature>
<feature type="binding site" evidence="1">
    <location>
        <position position="496"/>
    </location>
    <ligand>
        <name>ATP</name>
        <dbReference type="ChEBI" id="CHEBI:30616"/>
    </ligand>
</feature>